<evidence type="ECO:0000255" key="1">
    <source>
        <dbReference type="HAMAP-Rule" id="MF_00253"/>
    </source>
</evidence>
<evidence type="ECO:0000305" key="2"/>
<gene>
    <name evidence="1" type="primary">glyQS</name>
    <name type="ordered locus">RB10547</name>
</gene>
<feature type="chain" id="PRO_0000226046" description="Glycine--tRNA ligase">
    <location>
        <begin position="1"/>
        <end position="536"/>
    </location>
</feature>
<feature type="region of interest" description="Insert">
    <location>
        <begin position="56"/>
        <end position="67"/>
    </location>
</feature>
<feature type="region of interest" description="Insert">
    <location>
        <begin position="350"/>
        <end position="372"/>
    </location>
</feature>
<feature type="binding site" evidence="1">
    <location>
        <position position="106"/>
    </location>
    <ligand>
        <name>substrate</name>
    </ligand>
</feature>
<feature type="binding site" evidence="1">
    <location>
        <position position="213"/>
    </location>
    <ligand>
        <name>substrate</name>
    </ligand>
</feature>
<feature type="binding site" evidence="1">
    <location>
        <begin position="245"/>
        <end position="247"/>
    </location>
    <ligand>
        <name>ATP</name>
        <dbReference type="ChEBI" id="CHEBI:30616"/>
    </ligand>
</feature>
<feature type="binding site" evidence="1">
    <location>
        <begin position="255"/>
        <end position="260"/>
    </location>
    <ligand>
        <name>ATP</name>
        <dbReference type="ChEBI" id="CHEBI:30616"/>
    </ligand>
</feature>
<feature type="binding site" evidence="1">
    <location>
        <begin position="260"/>
        <end position="264"/>
    </location>
    <ligand>
        <name>substrate</name>
    </ligand>
</feature>
<feature type="binding site" evidence="1">
    <location>
        <begin position="333"/>
        <end position="334"/>
    </location>
    <ligand>
        <name>ATP</name>
        <dbReference type="ChEBI" id="CHEBI:30616"/>
    </ligand>
</feature>
<feature type="binding site" evidence="1">
    <location>
        <begin position="396"/>
        <end position="400"/>
    </location>
    <ligand>
        <name>substrate</name>
    </ligand>
</feature>
<feature type="binding site" evidence="1">
    <location>
        <begin position="400"/>
        <end position="403"/>
    </location>
    <ligand>
        <name>ATP</name>
        <dbReference type="ChEBI" id="CHEBI:30616"/>
    </ligand>
</feature>
<sequence>MDALVSLCKRRGFLFQSSEIYGGVQGFWDYGPLGVELKRNLKDAWWHDMISGHNELVSPAGAPSTFEMVGLDCTIIMHPQVWKCSGHYDLFHDHMVDCRESKKRYRFDQVRGRFVEYQGTKIFVSTLAEIEQEEDEVRRRGMKFFKLRPKNADELTVEKESLTLDKLDSTDNVLAPDAKTLGTLTEPREFNLMFKTTLGALGGEEDTTFLRPETAQGIFVNFKNVVDSSRVRIPFGIGQVGKSFRNEITPRNFTFRSREFEQMEIEFFCHPNQSQEWYRYWRDRRMAWYTKLGLSNESLIMREHHTEELAHYSVGTADIEYAFPFLPEGEYGELEGIAHRGDFDLRSHMEGKLDPATNPMTVELNEHGKPKHRGSGKDLAYRDDITNEKFVPHVIEPSAGADRAALAFLCEAYTEDEAPDENGKMQTRTVMKLDPRLAPIKAAVFPLVKKDGMPEVAQEIYGALKEHYNVFYDAKGAVGRRYRRQDEAGTPYCITVDGDSLTDKTVTIRDRDTLEQTRVKIDDVVSEIQSRMKAST</sequence>
<name>SYG_RHOBA</name>
<organism>
    <name type="scientific">Rhodopirellula baltica (strain DSM 10527 / NCIMB 13988 / SH1)</name>
    <dbReference type="NCBI Taxonomy" id="243090"/>
    <lineage>
        <taxon>Bacteria</taxon>
        <taxon>Pseudomonadati</taxon>
        <taxon>Planctomycetota</taxon>
        <taxon>Planctomycetia</taxon>
        <taxon>Pirellulales</taxon>
        <taxon>Pirellulaceae</taxon>
        <taxon>Rhodopirellula</taxon>
    </lineage>
</organism>
<reference key="1">
    <citation type="journal article" date="2003" name="Proc. Natl. Acad. Sci. U.S.A.">
        <title>Complete genome sequence of the marine planctomycete Pirellula sp. strain 1.</title>
        <authorList>
            <person name="Gloeckner F.O."/>
            <person name="Kube M."/>
            <person name="Bauer M."/>
            <person name="Teeling H."/>
            <person name="Lombardot T."/>
            <person name="Ludwig W."/>
            <person name="Gade D."/>
            <person name="Beck A."/>
            <person name="Borzym K."/>
            <person name="Heitmann K."/>
            <person name="Rabus R."/>
            <person name="Schlesner H."/>
            <person name="Amann R."/>
            <person name="Reinhardt R."/>
        </authorList>
    </citation>
    <scope>NUCLEOTIDE SEQUENCE [LARGE SCALE GENOMIC DNA]</scope>
    <source>
        <strain>DSM 10527 / NCIMB 13988 / SH1</strain>
    </source>
</reference>
<accession>Q7UEU9</accession>
<keyword id="KW-0030">Aminoacyl-tRNA synthetase</keyword>
<keyword id="KW-0067">ATP-binding</keyword>
<keyword id="KW-0963">Cytoplasm</keyword>
<keyword id="KW-0436">Ligase</keyword>
<keyword id="KW-0547">Nucleotide-binding</keyword>
<keyword id="KW-0648">Protein biosynthesis</keyword>
<keyword id="KW-1185">Reference proteome</keyword>
<comment type="function">
    <text evidence="1">Catalyzes the attachment of glycine to tRNA(Gly).</text>
</comment>
<comment type="catalytic activity">
    <reaction evidence="1">
        <text>tRNA(Gly) + glycine + ATP = glycyl-tRNA(Gly) + AMP + diphosphate</text>
        <dbReference type="Rhea" id="RHEA:16013"/>
        <dbReference type="Rhea" id="RHEA-COMP:9664"/>
        <dbReference type="Rhea" id="RHEA-COMP:9683"/>
        <dbReference type="ChEBI" id="CHEBI:30616"/>
        <dbReference type="ChEBI" id="CHEBI:33019"/>
        <dbReference type="ChEBI" id="CHEBI:57305"/>
        <dbReference type="ChEBI" id="CHEBI:78442"/>
        <dbReference type="ChEBI" id="CHEBI:78522"/>
        <dbReference type="ChEBI" id="CHEBI:456215"/>
        <dbReference type="EC" id="6.1.1.14"/>
    </reaction>
</comment>
<comment type="subunit">
    <text evidence="1">Homodimer.</text>
</comment>
<comment type="subcellular location">
    <subcellularLocation>
        <location evidence="1">Cytoplasm</location>
    </subcellularLocation>
</comment>
<comment type="similarity">
    <text evidence="1">Belongs to the class-II aminoacyl-tRNA synthetase family.</text>
</comment>
<comment type="sequence caution" evidence="2">
    <conflict type="erroneous initiation">
        <sequence resource="EMBL-CDS" id="CAD78935"/>
    </conflict>
</comment>
<proteinExistence type="inferred from homology"/>
<protein>
    <recommendedName>
        <fullName evidence="1">Glycine--tRNA ligase</fullName>
        <ecNumber evidence="1">6.1.1.14</ecNumber>
    </recommendedName>
    <alternativeName>
        <fullName evidence="1">Glycyl-tRNA synthetase</fullName>
        <shortName evidence="1">GlyRS</shortName>
    </alternativeName>
</protein>
<dbReference type="EC" id="6.1.1.14" evidence="1"/>
<dbReference type="EMBL" id="BX294151">
    <property type="protein sequence ID" value="CAD78935.1"/>
    <property type="status" value="ALT_INIT"/>
    <property type="molecule type" value="Genomic_DNA"/>
</dbReference>
<dbReference type="RefSeq" id="NP_869478.1">
    <property type="nucleotide sequence ID" value="NC_005027.1"/>
</dbReference>
<dbReference type="RefSeq" id="WP_007337137.1">
    <property type="nucleotide sequence ID" value="NC_005027.1"/>
</dbReference>
<dbReference type="SMR" id="Q7UEU9"/>
<dbReference type="STRING" id="243090.RB10547"/>
<dbReference type="EnsemblBacteria" id="CAD78935">
    <property type="protein sequence ID" value="CAD78935"/>
    <property type="gene ID" value="RB10547"/>
</dbReference>
<dbReference type="KEGG" id="rba:RB10547"/>
<dbReference type="PATRIC" id="fig|243090.15.peg.5095"/>
<dbReference type="eggNOG" id="COG0423">
    <property type="taxonomic scope" value="Bacteria"/>
</dbReference>
<dbReference type="HOGENOM" id="CLU_015515_2_1_0"/>
<dbReference type="InParanoid" id="Q7UEU9"/>
<dbReference type="OrthoDB" id="9760853at2"/>
<dbReference type="Proteomes" id="UP000001025">
    <property type="component" value="Chromosome"/>
</dbReference>
<dbReference type="GO" id="GO:0005737">
    <property type="term" value="C:cytoplasm"/>
    <property type="evidence" value="ECO:0000318"/>
    <property type="project" value="GO_Central"/>
</dbReference>
<dbReference type="GO" id="GO:0005524">
    <property type="term" value="F:ATP binding"/>
    <property type="evidence" value="ECO:0007669"/>
    <property type="project" value="UniProtKB-UniRule"/>
</dbReference>
<dbReference type="GO" id="GO:0004820">
    <property type="term" value="F:glycine-tRNA ligase activity"/>
    <property type="evidence" value="ECO:0000250"/>
    <property type="project" value="UniProtKB"/>
</dbReference>
<dbReference type="GO" id="GO:0046983">
    <property type="term" value="F:protein dimerization activity"/>
    <property type="evidence" value="ECO:0000250"/>
    <property type="project" value="UniProtKB"/>
</dbReference>
<dbReference type="GO" id="GO:0006426">
    <property type="term" value="P:glycyl-tRNA aminoacylation"/>
    <property type="evidence" value="ECO:0000318"/>
    <property type="project" value="GO_Central"/>
</dbReference>
<dbReference type="CDD" id="cd00774">
    <property type="entry name" value="GlyRS-like_core"/>
    <property type="match status" value="1"/>
</dbReference>
<dbReference type="CDD" id="cd00858">
    <property type="entry name" value="GlyRS_anticodon"/>
    <property type="match status" value="1"/>
</dbReference>
<dbReference type="FunFam" id="3.40.50.800:FF:000002">
    <property type="entry name" value="Glycine--tRNA ligase"/>
    <property type="match status" value="1"/>
</dbReference>
<dbReference type="Gene3D" id="3.40.50.800">
    <property type="entry name" value="Anticodon-binding domain"/>
    <property type="match status" value="1"/>
</dbReference>
<dbReference type="Gene3D" id="3.30.930.10">
    <property type="entry name" value="Bira Bifunctional Protein, Domain 2"/>
    <property type="match status" value="1"/>
</dbReference>
<dbReference type="HAMAP" id="MF_00253_B">
    <property type="entry name" value="Gly_tRNA_synth_B"/>
    <property type="match status" value="1"/>
</dbReference>
<dbReference type="InterPro" id="IPR002314">
    <property type="entry name" value="aa-tRNA-synt_IIb"/>
</dbReference>
<dbReference type="InterPro" id="IPR006195">
    <property type="entry name" value="aa-tRNA-synth_II"/>
</dbReference>
<dbReference type="InterPro" id="IPR045864">
    <property type="entry name" value="aa-tRNA-synth_II/BPL/LPL"/>
</dbReference>
<dbReference type="InterPro" id="IPR004154">
    <property type="entry name" value="Anticodon-bd"/>
</dbReference>
<dbReference type="InterPro" id="IPR036621">
    <property type="entry name" value="Anticodon-bd_dom_sf"/>
</dbReference>
<dbReference type="InterPro" id="IPR027031">
    <property type="entry name" value="Gly-tRNA_synthase/POLG2"/>
</dbReference>
<dbReference type="InterPro" id="IPR022961">
    <property type="entry name" value="Gly_tRNA_ligase_bac"/>
</dbReference>
<dbReference type="InterPro" id="IPR033731">
    <property type="entry name" value="GlyRS-like_core"/>
</dbReference>
<dbReference type="InterPro" id="IPR002315">
    <property type="entry name" value="tRNA-synt_gly"/>
</dbReference>
<dbReference type="NCBIfam" id="TIGR00389">
    <property type="entry name" value="glyS_dimeric"/>
    <property type="match status" value="1"/>
</dbReference>
<dbReference type="NCBIfam" id="NF003211">
    <property type="entry name" value="PRK04173.1"/>
    <property type="match status" value="1"/>
</dbReference>
<dbReference type="PANTHER" id="PTHR10745:SF8">
    <property type="entry name" value="DNA POLYMERASE SUBUNIT GAMMA-2, MITOCHONDRIAL"/>
    <property type="match status" value="1"/>
</dbReference>
<dbReference type="PANTHER" id="PTHR10745">
    <property type="entry name" value="GLYCYL-TRNA SYNTHETASE/DNA POLYMERASE SUBUNIT GAMMA-2"/>
    <property type="match status" value="1"/>
</dbReference>
<dbReference type="Pfam" id="PF03129">
    <property type="entry name" value="HGTP_anticodon"/>
    <property type="match status" value="1"/>
</dbReference>
<dbReference type="Pfam" id="PF00587">
    <property type="entry name" value="tRNA-synt_2b"/>
    <property type="match status" value="1"/>
</dbReference>
<dbReference type="PRINTS" id="PR01043">
    <property type="entry name" value="TRNASYNTHGLY"/>
</dbReference>
<dbReference type="SUPFAM" id="SSF52954">
    <property type="entry name" value="Class II aaRS ABD-related"/>
    <property type="match status" value="1"/>
</dbReference>
<dbReference type="SUPFAM" id="SSF55681">
    <property type="entry name" value="Class II aaRS and biotin synthetases"/>
    <property type="match status" value="1"/>
</dbReference>
<dbReference type="PROSITE" id="PS50862">
    <property type="entry name" value="AA_TRNA_LIGASE_II"/>
    <property type="match status" value="1"/>
</dbReference>